<accession>D0ZW85</accession>
<comment type="function">
    <text evidence="2 3 4">Acts as an anti-FlhC(2)FlhD(4) factor by binding to FlhD, decreasing its ability to bind DNA, and thus negatively regulates expression of flagellar class II operons, decreasing motility in nutrient-poor medium. Positively regulates expression of the multicellular rdar morphotype behavior, its major regulator CsgD and suppresses motility. Regulates the rdar morphotype and motility indirectly by affecting the expression of the c-di-GMP-dependent phosphodiesterases YciZ and YhjH. Required for resistance to host phagocyte oxidase. Suppresses killing of macrophages, while promoting resistance to hydrogen peroxide. Data regarding c-di-GMP is controversial; suppresses bacterial c-di-GMP levels (PubMed:15882417) but neither synthesizes nor degrades c-di-GMP (PubMed:19376870).</text>
</comment>
<comment type="subunit">
    <text evidence="1">Interacts with FlhD in the FlhC(2)FlhD(4) heterohexamer, inhibiting its ability to activate transcription.</text>
</comment>
<comment type="disruption phenotype">
    <text evidence="2 3">Decreased bacterial resistance to hydrogen peroxide and accelerated bacterial killing of macrophages, increased levels of c-di-GMP (PubMed:15882417). Down-regulation of rdar morphology, 50% reduction in CsgD expression, cellulose and curli fimbriae, increased swimming and swarming. Decrease in c-di-GMP levels (PubMed:19376870).</text>
</comment>
<comment type="miscellaneous">
    <text>The multicellular rdar morphotype is characterized by the expression of the adhesive extracellular matrix components cellulose and curli fimbriae.</text>
</comment>
<comment type="similarity">
    <text evidence="5">Belongs to the YdiV family.</text>
</comment>
<comment type="caution">
    <text evidence="6 7 8">Has been proposed to be involved in c-di-GMP turnover (PubMed:15882417), but also not be involved in its turnover (PubMed:19376870). Mutagenesis of Glu-29 in the EAL domain suggests if this protein has c-di-GMP phosphdiesterase activity it is not involved in motility regulation (PubMed:21278297). Note that (PubMed:21278297) experiments were done in strain LT2, which is not a 14028 derivative.</text>
</comment>
<dbReference type="EMBL" id="CP001363">
    <property type="protein sequence ID" value="ACY88111.1"/>
    <property type="molecule type" value="Genomic_DNA"/>
</dbReference>
<dbReference type="RefSeq" id="WP_000562005.1">
    <property type="nucleotide sequence ID" value="NZ_CP043402.1"/>
</dbReference>
<dbReference type="SMR" id="D0ZW85"/>
<dbReference type="KEGG" id="seo:STM14_1632"/>
<dbReference type="PATRIC" id="fig|588858.6.peg.1573"/>
<dbReference type="HOGENOM" id="CLU_089254_1_1_6"/>
<dbReference type="BioCyc" id="SENT588858:STM14_RS07580-MONOMER"/>
<dbReference type="Proteomes" id="UP000002695">
    <property type="component" value="Chromosome"/>
</dbReference>
<dbReference type="GO" id="GO:0071111">
    <property type="term" value="F:cyclic-guanylate-specific phosphodiesterase activity"/>
    <property type="evidence" value="ECO:0007669"/>
    <property type="project" value="InterPro"/>
</dbReference>
<dbReference type="Gene3D" id="3.20.20.450">
    <property type="entry name" value="EAL domain"/>
    <property type="match status" value="1"/>
</dbReference>
<dbReference type="InterPro" id="IPR050706">
    <property type="entry name" value="Cyclic-di-GMP_PDE-like"/>
</dbReference>
<dbReference type="InterPro" id="IPR001633">
    <property type="entry name" value="EAL_dom"/>
</dbReference>
<dbReference type="InterPro" id="IPR035919">
    <property type="entry name" value="EAL_sf"/>
</dbReference>
<dbReference type="PANTHER" id="PTHR33121:SF69">
    <property type="entry name" value="ANTI-FLHC(2)FLHD(4) FACTOR YDIV-RELATED"/>
    <property type="match status" value="1"/>
</dbReference>
<dbReference type="PANTHER" id="PTHR33121">
    <property type="entry name" value="CYCLIC DI-GMP PHOSPHODIESTERASE PDEF"/>
    <property type="match status" value="1"/>
</dbReference>
<dbReference type="Pfam" id="PF00563">
    <property type="entry name" value="EAL"/>
    <property type="match status" value="1"/>
</dbReference>
<dbReference type="SUPFAM" id="SSF141868">
    <property type="entry name" value="EAL domain-like"/>
    <property type="match status" value="1"/>
</dbReference>
<feature type="chain" id="PRO_0000417582" description="Anti-FlhC(2)FlhD(4) factor YdiV">
    <location>
        <begin position="1"/>
        <end position="237"/>
    </location>
</feature>
<feature type="domain" description="EAL">
    <location>
        <begin position="1"/>
        <end position="237"/>
    </location>
</feature>
<feature type="mutagenesis site" description="Gain of function, increases CsgD expression in disruption, represses swarming." evidence="3">
    <original>N</original>
    <variation>A</variation>
    <location>
        <position position="85"/>
    </location>
</feature>
<feature type="mutagenesis site" description="Does not restore CsgD expression in disruption." evidence="3">
    <original>F</original>
    <variation>A</variation>
    <location>
        <position position="168"/>
    </location>
</feature>
<gene>
    <name type="primary">ydiV</name>
    <name type="synonym">cdgR</name>
    <name type="ordered locus">STM14_1632</name>
</gene>
<proteinExistence type="evidence at protein level"/>
<organism>
    <name type="scientific">Salmonella typhimurium (strain 14028s / SGSC 2262)</name>
    <dbReference type="NCBI Taxonomy" id="588858"/>
    <lineage>
        <taxon>Bacteria</taxon>
        <taxon>Pseudomonadati</taxon>
        <taxon>Pseudomonadota</taxon>
        <taxon>Gammaproteobacteria</taxon>
        <taxon>Enterobacterales</taxon>
        <taxon>Enterobacteriaceae</taxon>
        <taxon>Salmonella</taxon>
    </lineage>
</organism>
<sequence>MIASLDELYHSELFFLPVMDENARLVGLEIIATFAAEDGAVRMPTELVAPRLSVEEQYCLFVEKLALLETCQHFFIQHKLIAWLNLPPAISDLLLLDSELFSRAARFPFLELAINENYPGLNQGKNNETLANLAMHFPLMLANFGAGEASTKAIFDGLFKRVMLDKNFIQQRAEMISFEPFMHAIVAQISSSCESLMIAGIDTEAMFARAAPLGFSAFQGGLWPPVPVSQLIKLVQR</sequence>
<evidence type="ECO:0000250" key="1"/>
<evidence type="ECO:0000269" key="2">
    <source>
    </source>
</evidence>
<evidence type="ECO:0000269" key="3">
    <source>
    </source>
</evidence>
<evidence type="ECO:0000269" key="4">
    <source>
    </source>
</evidence>
<evidence type="ECO:0000305" key="5"/>
<evidence type="ECO:0000305" key="6">
    <source>
    </source>
</evidence>
<evidence type="ECO:0000305" key="7">
    <source>
    </source>
</evidence>
<evidence type="ECO:0000305" key="8">
    <source>
    </source>
</evidence>
<name>YDIV_SALT1</name>
<reference key="1">
    <citation type="journal article" date="2010" name="J. Bacteriol.">
        <title>Short-term signatures of evolutionary change in the Salmonella enterica serovar typhimurium 14028 genome.</title>
        <authorList>
            <person name="Jarvik T."/>
            <person name="Smillie C."/>
            <person name="Groisman E.A."/>
            <person name="Ochman H."/>
        </authorList>
    </citation>
    <scope>NUCLEOTIDE SEQUENCE [LARGE SCALE GENOMIC DNA]</scope>
    <source>
        <strain>14028s / SGSC 2262</strain>
    </source>
</reference>
<reference key="2">
    <citation type="journal article" date="2005" name="Mol. Microbiol.">
        <title>A glutamate-alanine-leucine (EAL) domain protein of Salmonella controls bacterial survival in mice, antioxidant defence and killing of macrophages: role of cyclic diGMP.</title>
        <authorList>
            <person name="Hisert K.B."/>
            <person name="MacCoss M."/>
            <person name="Shiloh M.U."/>
            <person name="Darwin K.H."/>
            <person name="Singh S."/>
            <person name="Jones R.A."/>
            <person name="Ehrt S."/>
            <person name="Zhang Z."/>
            <person name="Gaffney B.L."/>
            <person name="Gandotra S."/>
            <person name="Holden D.W."/>
            <person name="Murray D."/>
            <person name="Nathan C."/>
        </authorList>
    </citation>
    <scope>FUNCTION IN VIRULENCE</scope>
    <scope>DISRUPTION PHENOTYPE</scope>
    <source>
        <strain>14028</strain>
    </source>
</reference>
<reference key="3">
    <citation type="journal article" date="2009" name="J. Bacteriol.">
        <title>A role for the EAL-like protein STM1344 in regulation of CsgD expression and motility in Salmonella enterica serovar Typhimurium.</title>
        <authorList>
            <person name="Simm R."/>
            <person name="Remminghorst U."/>
            <person name="Ahmad I."/>
            <person name="Zakikhany K."/>
            <person name="Romling U."/>
        </authorList>
    </citation>
    <scope>LACK OF C-DI-GMP PHOSPHODIESTERASE OR DIGUANYLATE CYCLASE ACTIVITY</scope>
    <scope>DISRUPTION PHENOTYPE</scope>
    <scope>MUTAGENESIS OF ASN-85 AND PHE-168</scope>
    <source>
        <strain>14028</strain>
    </source>
</reference>
<reference key="4">
    <citation type="journal article" date="2011" name="J. Bacteriol.">
        <title>EAL domain protein YdiV acts as an anti-FlhD4C2 factor responsible for nutritional control of the flagellar regulon in Salmonella enterica Serovar Typhimurium.</title>
        <authorList>
            <person name="Wada T."/>
            <person name="Morizane T."/>
            <person name="Abo T."/>
            <person name="Tominaga A."/>
            <person name="Inoue-Tanaka K."/>
            <person name="Kutsukake K."/>
        </authorList>
    </citation>
    <scope>FUNCTION IN REPRESSION OF MOTILITY</scope>
    <source>
        <strain>LT2 / SGSC1412 / ATCC 700720</strain>
    </source>
</reference>
<protein>
    <recommendedName>
        <fullName>Anti-FlhC(2)FlhD(4) factor YdiV</fullName>
    </recommendedName>
    <alternativeName>
        <fullName>EAL-like protein YdiV</fullName>
    </alternativeName>
    <alternativeName>
        <fullName>c-di-GMP regulator CdgR</fullName>
    </alternativeName>
</protein>
<keyword id="KW-0678">Repressor</keyword>
<keyword id="KW-0804">Transcription</keyword>
<keyword id="KW-0805">Transcription regulation</keyword>
<keyword id="KW-0843">Virulence</keyword>